<evidence type="ECO:0000255" key="1">
    <source>
        <dbReference type="HAMAP-Rule" id="MF_00122"/>
    </source>
</evidence>
<protein>
    <recommendedName>
        <fullName evidence="1">Aspartyl/glutamyl-tRNA(Asn/Gln) amidotransferase subunit C</fullName>
        <shortName evidence="1">Asp/Glu-ADT subunit C</shortName>
        <ecNumber evidence="1">6.3.5.-</ecNumber>
    </recommendedName>
</protein>
<proteinExistence type="inferred from homology"/>
<organism>
    <name type="scientific">Gloeothece citriformis (strain PCC 7424)</name>
    <name type="common">Cyanothece sp. (strain PCC 7424)</name>
    <dbReference type="NCBI Taxonomy" id="65393"/>
    <lineage>
        <taxon>Bacteria</taxon>
        <taxon>Bacillati</taxon>
        <taxon>Cyanobacteriota</taxon>
        <taxon>Cyanophyceae</taxon>
        <taxon>Oscillatoriophycideae</taxon>
        <taxon>Chroococcales</taxon>
        <taxon>Aphanothecaceae</taxon>
        <taxon>Gloeothece</taxon>
        <taxon>Gloeothece citriformis</taxon>
    </lineage>
</organism>
<gene>
    <name evidence="1" type="primary">gatC</name>
    <name type="ordered locus">PCC7424_3997</name>
</gene>
<sequence length="98" mass="11326">MIDTEQVKKIAHLARLEITPEQEEQFTGQLSSILEYFDQLSELDTTDVPPTTRAIEIKNITRSDSMQPYPSREELLKEAPEQEGDFFKVPQILNTDEE</sequence>
<dbReference type="EC" id="6.3.5.-" evidence="1"/>
<dbReference type="EMBL" id="CP001291">
    <property type="protein sequence ID" value="ACK72371.1"/>
    <property type="molecule type" value="Genomic_DNA"/>
</dbReference>
<dbReference type="RefSeq" id="WP_015955956.1">
    <property type="nucleotide sequence ID" value="NC_011729.1"/>
</dbReference>
<dbReference type="SMR" id="B7KKZ9"/>
<dbReference type="STRING" id="65393.PCC7424_3997"/>
<dbReference type="KEGG" id="cyc:PCC7424_3997"/>
<dbReference type="eggNOG" id="COG0721">
    <property type="taxonomic scope" value="Bacteria"/>
</dbReference>
<dbReference type="HOGENOM" id="CLU_105899_2_0_3"/>
<dbReference type="OrthoDB" id="9813938at2"/>
<dbReference type="Proteomes" id="UP000002384">
    <property type="component" value="Chromosome"/>
</dbReference>
<dbReference type="GO" id="GO:0050566">
    <property type="term" value="F:asparaginyl-tRNA synthase (glutamine-hydrolyzing) activity"/>
    <property type="evidence" value="ECO:0007669"/>
    <property type="project" value="RHEA"/>
</dbReference>
<dbReference type="GO" id="GO:0005524">
    <property type="term" value="F:ATP binding"/>
    <property type="evidence" value="ECO:0007669"/>
    <property type="project" value="UniProtKB-KW"/>
</dbReference>
<dbReference type="GO" id="GO:0050567">
    <property type="term" value="F:glutaminyl-tRNA synthase (glutamine-hydrolyzing) activity"/>
    <property type="evidence" value="ECO:0007669"/>
    <property type="project" value="UniProtKB-UniRule"/>
</dbReference>
<dbReference type="GO" id="GO:0070681">
    <property type="term" value="P:glutaminyl-tRNAGln biosynthesis via transamidation"/>
    <property type="evidence" value="ECO:0007669"/>
    <property type="project" value="TreeGrafter"/>
</dbReference>
<dbReference type="GO" id="GO:0006450">
    <property type="term" value="P:regulation of translational fidelity"/>
    <property type="evidence" value="ECO:0007669"/>
    <property type="project" value="InterPro"/>
</dbReference>
<dbReference type="GO" id="GO:0006412">
    <property type="term" value="P:translation"/>
    <property type="evidence" value="ECO:0007669"/>
    <property type="project" value="UniProtKB-UniRule"/>
</dbReference>
<dbReference type="Gene3D" id="1.10.20.60">
    <property type="entry name" value="Glu-tRNAGln amidotransferase C subunit, N-terminal domain"/>
    <property type="match status" value="1"/>
</dbReference>
<dbReference type="HAMAP" id="MF_00122">
    <property type="entry name" value="GatC"/>
    <property type="match status" value="1"/>
</dbReference>
<dbReference type="InterPro" id="IPR036113">
    <property type="entry name" value="Asp/Glu-ADT_sf_sub_c"/>
</dbReference>
<dbReference type="InterPro" id="IPR003837">
    <property type="entry name" value="GatC"/>
</dbReference>
<dbReference type="NCBIfam" id="TIGR00135">
    <property type="entry name" value="gatC"/>
    <property type="match status" value="1"/>
</dbReference>
<dbReference type="PANTHER" id="PTHR15004">
    <property type="entry name" value="GLUTAMYL-TRNA(GLN) AMIDOTRANSFERASE SUBUNIT C, MITOCHONDRIAL"/>
    <property type="match status" value="1"/>
</dbReference>
<dbReference type="PANTHER" id="PTHR15004:SF0">
    <property type="entry name" value="GLUTAMYL-TRNA(GLN) AMIDOTRANSFERASE SUBUNIT C, MITOCHONDRIAL"/>
    <property type="match status" value="1"/>
</dbReference>
<dbReference type="Pfam" id="PF02686">
    <property type="entry name" value="GatC"/>
    <property type="match status" value="1"/>
</dbReference>
<dbReference type="SUPFAM" id="SSF141000">
    <property type="entry name" value="Glu-tRNAGln amidotransferase C subunit"/>
    <property type="match status" value="1"/>
</dbReference>
<reference key="1">
    <citation type="journal article" date="2011" name="MBio">
        <title>Novel metabolic attributes of the genus Cyanothece, comprising a group of unicellular nitrogen-fixing Cyanobacteria.</title>
        <authorList>
            <person name="Bandyopadhyay A."/>
            <person name="Elvitigala T."/>
            <person name="Welsh E."/>
            <person name="Stockel J."/>
            <person name="Liberton M."/>
            <person name="Min H."/>
            <person name="Sherman L.A."/>
            <person name="Pakrasi H.B."/>
        </authorList>
    </citation>
    <scope>NUCLEOTIDE SEQUENCE [LARGE SCALE GENOMIC DNA]</scope>
    <source>
        <strain>PCC 7424</strain>
    </source>
</reference>
<accession>B7KKZ9</accession>
<feature type="chain" id="PRO_1000117630" description="Aspartyl/glutamyl-tRNA(Asn/Gln) amidotransferase subunit C">
    <location>
        <begin position="1"/>
        <end position="98"/>
    </location>
</feature>
<keyword id="KW-0067">ATP-binding</keyword>
<keyword id="KW-0436">Ligase</keyword>
<keyword id="KW-0547">Nucleotide-binding</keyword>
<keyword id="KW-0648">Protein biosynthesis</keyword>
<keyword id="KW-1185">Reference proteome</keyword>
<name>GATC_GLOC7</name>
<comment type="function">
    <text evidence="1">Allows the formation of correctly charged Asn-tRNA(Asn) or Gln-tRNA(Gln) through the transamidation of misacylated Asp-tRNA(Asn) or Glu-tRNA(Gln) in organisms which lack either or both of asparaginyl-tRNA or glutaminyl-tRNA synthetases. The reaction takes place in the presence of glutamine and ATP through an activated phospho-Asp-tRNA(Asn) or phospho-Glu-tRNA(Gln).</text>
</comment>
<comment type="catalytic activity">
    <reaction evidence="1">
        <text>L-glutamyl-tRNA(Gln) + L-glutamine + ATP + H2O = L-glutaminyl-tRNA(Gln) + L-glutamate + ADP + phosphate + H(+)</text>
        <dbReference type="Rhea" id="RHEA:17521"/>
        <dbReference type="Rhea" id="RHEA-COMP:9681"/>
        <dbReference type="Rhea" id="RHEA-COMP:9684"/>
        <dbReference type="ChEBI" id="CHEBI:15377"/>
        <dbReference type="ChEBI" id="CHEBI:15378"/>
        <dbReference type="ChEBI" id="CHEBI:29985"/>
        <dbReference type="ChEBI" id="CHEBI:30616"/>
        <dbReference type="ChEBI" id="CHEBI:43474"/>
        <dbReference type="ChEBI" id="CHEBI:58359"/>
        <dbReference type="ChEBI" id="CHEBI:78520"/>
        <dbReference type="ChEBI" id="CHEBI:78521"/>
        <dbReference type="ChEBI" id="CHEBI:456216"/>
    </reaction>
</comment>
<comment type="catalytic activity">
    <reaction evidence="1">
        <text>L-aspartyl-tRNA(Asn) + L-glutamine + ATP + H2O = L-asparaginyl-tRNA(Asn) + L-glutamate + ADP + phosphate + 2 H(+)</text>
        <dbReference type="Rhea" id="RHEA:14513"/>
        <dbReference type="Rhea" id="RHEA-COMP:9674"/>
        <dbReference type="Rhea" id="RHEA-COMP:9677"/>
        <dbReference type="ChEBI" id="CHEBI:15377"/>
        <dbReference type="ChEBI" id="CHEBI:15378"/>
        <dbReference type="ChEBI" id="CHEBI:29985"/>
        <dbReference type="ChEBI" id="CHEBI:30616"/>
        <dbReference type="ChEBI" id="CHEBI:43474"/>
        <dbReference type="ChEBI" id="CHEBI:58359"/>
        <dbReference type="ChEBI" id="CHEBI:78515"/>
        <dbReference type="ChEBI" id="CHEBI:78516"/>
        <dbReference type="ChEBI" id="CHEBI:456216"/>
    </reaction>
</comment>
<comment type="subunit">
    <text evidence="1">Heterotrimer of A, B and C subunits.</text>
</comment>
<comment type="similarity">
    <text evidence="1">Belongs to the GatC family.</text>
</comment>